<name>DTD_RHOJR</name>
<proteinExistence type="inferred from homology"/>
<sequence>MRALVQRVTSASVRVDGDEVGRITPPAGGHGLLVLVGVTHTDDEAKAALLAKKVWTMRILENEQSASDLDAPVLVASQFTLMADTRRGRRPSWSAAAPRPVAEPLVDEFTGALRELGATVETGVFGEHMEISLVNDGPVTLLIDV</sequence>
<organism>
    <name type="scientific">Rhodococcus jostii (strain RHA1)</name>
    <dbReference type="NCBI Taxonomy" id="101510"/>
    <lineage>
        <taxon>Bacteria</taxon>
        <taxon>Bacillati</taxon>
        <taxon>Actinomycetota</taxon>
        <taxon>Actinomycetes</taxon>
        <taxon>Mycobacteriales</taxon>
        <taxon>Nocardiaceae</taxon>
        <taxon>Rhodococcus</taxon>
    </lineage>
</organism>
<feature type="chain" id="PRO_0000259304" description="D-aminoacyl-tRNA deacylase">
    <location>
        <begin position="1"/>
        <end position="145"/>
    </location>
</feature>
<feature type="short sequence motif" description="Gly-cisPro motif, important for rejection of L-amino acids" evidence="1">
    <location>
        <begin position="137"/>
        <end position="138"/>
    </location>
</feature>
<accession>Q0S3F3</accession>
<reference key="1">
    <citation type="journal article" date="2006" name="Proc. Natl. Acad. Sci. U.S.A.">
        <title>The complete genome of Rhodococcus sp. RHA1 provides insights into a catabolic powerhouse.</title>
        <authorList>
            <person name="McLeod M.P."/>
            <person name="Warren R.L."/>
            <person name="Hsiao W.W.L."/>
            <person name="Araki N."/>
            <person name="Myhre M."/>
            <person name="Fernandes C."/>
            <person name="Miyazawa D."/>
            <person name="Wong W."/>
            <person name="Lillquist A.L."/>
            <person name="Wang D."/>
            <person name="Dosanjh M."/>
            <person name="Hara H."/>
            <person name="Petrescu A."/>
            <person name="Morin R.D."/>
            <person name="Yang G."/>
            <person name="Stott J.M."/>
            <person name="Schein J.E."/>
            <person name="Shin H."/>
            <person name="Smailus D."/>
            <person name="Siddiqui A.S."/>
            <person name="Marra M.A."/>
            <person name="Jones S.J.M."/>
            <person name="Holt R."/>
            <person name="Brinkman F.S.L."/>
            <person name="Miyauchi K."/>
            <person name="Fukuda M."/>
            <person name="Davies J.E."/>
            <person name="Mohn W.W."/>
            <person name="Eltis L.D."/>
        </authorList>
    </citation>
    <scope>NUCLEOTIDE SEQUENCE [LARGE SCALE GENOMIC DNA]</scope>
    <source>
        <strain>RHA1</strain>
    </source>
</reference>
<dbReference type="EC" id="3.1.1.96" evidence="1"/>
<dbReference type="EMBL" id="CP000431">
    <property type="protein sequence ID" value="ABG97933.1"/>
    <property type="molecule type" value="Genomic_DNA"/>
</dbReference>
<dbReference type="RefSeq" id="WP_005253862.1">
    <property type="nucleotide sequence ID" value="NC_008268.1"/>
</dbReference>
<dbReference type="SMR" id="Q0S3F3"/>
<dbReference type="KEGG" id="rha:RHA1_ro06156"/>
<dbReference type="eggNOG" id="COG1490">
    <property type="taxonomic scope" value="Bacteria"/>
</dbReference>
<dbReference type="HOGENOM" id="CLU_076901_1_2_11"/>
<dbReference type="OrthoDB" id="9801395at2"/>
<dbReference type="Proteomes" id="UP000008710">
    <property type="component" value="Chromosome"/>
</dbReference>
<dbReference type="GO" id="GO:0005737">
    <property type="term" value="C:cytoplasm"/>
    <property type="evidence" value="ECO:0007669"/>
    <property type="project" value="UniProtKB-SubCell"/>
</dbReference>
<dbReference type="GO" id="GO:0051500">
    <property type="term" value="F:D-tyrosyl-tRNA(Tyr) deacylase activity"/>
    <property type="evidence" value="ECO:0007669"/>
    <property type="project" value="TreeGrafter"/>
</dbReference>
<dbReference type="GO" id="GO:0106026">
    <property type="term" value="F:Gly-tRNA(Ala) deacylase activity"/>
    <property type="evidence" value="ECO:0007669"/>
    <property type="project" value="UniProtKB-UniRule"/>
</dbReference>
<dbReference type="GO" id="GO:0043908">
    <property type="term" value="F:Ser(Gly)-tRNA(Ala) hydrolase activity"/>
    <property type="evidence" value="ECO:0007669"/>
    <property type="project" value="UniProtKB-UniRule"/>
</dbReference>
<dbReference type="GO" id="GO:0000049">
    <property type="term" value="F:tRNA binding"/>
    <property type="evidence" value="ECO:0007669"/>
    <property type="project" value="UniProtKB-UniRule"/>
</dbReference>
<dbReference type="GO" id="GO:0019478">
    <property type="term" value="P:D-amino acid catabolic process"/>
    <property type="evidence" value="ECO:0007669"/>
    <property type="project" value="UniProtKB-UniRule"/>
</dbReference>
<dbReference type="FunFam" id="3.50.80.10:FF:000001">
    <property type="entry name" value="D-aminoacyl-tRNA deacylase"/>
    <property type="match status" value="1"/>
</dbReference>
<dbReference type="Gene3D" id="3.50.80.10">
    <property type="entry name" value="D-tyrosyl-tRNA(Tyr) deacylase"/>
    <property type="match status" value="1"/>
</dbReference>
<dbReference type="HAMAP" id="MF_00518">
    <property type="entry name" value="Deacylase_Dtd"/>
    <property type="match status" value="1"/>
</dbReference>
<dbReference type="InterPro" id="IPR003732">
    <property type="entry name" value="Daa-tRNA_deacyls_DTD"/>
</dbReference>
<dbReference type="InterPro" id="IPR023509">
    <property type="entry name" value="DTD-like_sf"/>
</dbReference>
<dbReference type="NCBIfam" id="TIGR00256">
    <property type="entry name" value="D-aminoacyl-tRNA deacylase"/>
    <property type="match status" value="1"/>
</dbReference>
<dbReference type="PANTHER" id="PTHR10472:SF5">
    <property type="entry name" value="D-AMINOACYL-TRNA DEACYLASE 1"/>
    <property type="match status" value="1"/>
</dbReference>
<dbReference type="PANTHER" id="PTHR10472">
    <property type="entry name" value="D-TYROSYL-TRNA TYR DEACYLASE"/>
    <property type="match status" value="1"/>
</dbReference>
<dbReference type="Pfam" id="PF02580">
    <property type="entry name" value="Tyr_Deacylase"/>
    <property type="match status" value="1"/>
</dbReference>
<dbReference type="SUPFAM" id="SSF69500">
    <property type="entry name" value="DTD-like"/>
    <property type="match status" value="1"/>
</dbReference>
<comment type="function">
    <text evidence="1">An aminoacyl-tRNA editing enzyme that deacylates mischarged D-aminoacyl-tRNAs. Also deacylates mischarged glycyl-tRNA(Ala), protecting cells against glycine mischarging by AlaRS. Acts via tRNA-based rather than protein-based catalysis; rejects L-amino acids rather than detecting D-amino acids in the active site. By recycling D-aminoacyl-tRNA to D-amino acids and free tRNA molecules, this enzyme counteracts the toxicity associated with the formation of D-aminoacyl-tRNA entities in vivo and helps enforce protein L-homochirality.</text>
</comment>
<comment type="catalytic activity">
    <reaction evidence="1">
        <text>glycyl-tRNA(Ala) + H2O = tRNA(Ala) + glycine + H(+)</text>
        <dbReference type="Rhea" id="RHEA:53744"/>
        <dbReference type="Rhea" id="RHEA-COMP:9657"/>
        <dbReference type="Rhea" id="RHEA-COMP:13640"/>
        <dbReference type="ChEBI" id="CHEBI:15377"/>
        <dbReference type="ChEBI" id="CHEBI:15378"/>
        <dbReference type="ChEBI" id="CHEBI:57305"/>
        <dbReference type="ChEBI" id="CHEBI:78442"/>
        <dbReference type="ChEBI" id="CHEBI:78522"/>
        <dbReference type="EC" id="3.1.1.96"/>
    </reaction>
</comment>
<comment type="catalytic activity">
    <reaction evidence="1">
        <text>a D-aminoacyl-tRNA + H2O = a tRNA + a D-alpha-amino acid + H(+)</text>
        <dbReference type="Rhea" id="RHEA:13953"/>
        <dbReference type="Rhea" id="RHEA-COMP:10123"/>
        <dbReference type="Rhea" id="RHEA-COMP:10124"/>
        <dbReference type="ChEBI" id="CHEBI:15377"/>
        <dbReference type="ChEBI" id="CHEBI:15378"/>
        <dbReference type="ChEBI" id="CHEBI:59871"/>
        <dbReference type="ChEBI" id="CHEBI:78442"/>
        <dbReference type="ChEBI" id="CHEBI:79333"/>
        <dbReference type="EC" id="3.1.1.96"/>
    </reaction>
</comment>
<comment type="subunit">
    <text evidence="1">Homodimer.</text>
</comment>
<comment type="subcellular location">
    <subcellularLocation>
        <location evidence="1">Cytoplasm</location>
    </subcellularLocation>
</comment>
<comment type="domain">
    <text evidence="1">A Gly-cisPro motif from one monomer fits into the active site of the other monomer to allow specific chiral rejection of L-amino acids.</text>
</comment>
<comment type="similarity">
    <text evidence="1">Belongs to the DTD family.</text>
</comment>
<gene>
    <name evidence="1" type="primary">dtd</name>
    <name type="ordered locus">RHA1_ro06156</name>
</gene>
<keyword id="KW-0963">Cytoplasm</keyword>
<keyword id="KW-0378">Hydrolase</keyword>
<keyword id="KW-0694">RNA-binding</keyword>
<keyword id="KW-0820">tRNA-binding</keyword>
<protein>
    <recommendedName>
        <fullName evidence="1">D-aminoacyl-tRNA deacylase</fullName>
        <shortName evidence="1">DTD</shortName>
        <ecNumber evidence="1">3.1.1.96</ecNumber>
    </recommendedName>
    <alternativeName>
        <fullName evidence="1">Gly-tRNA(Ala) deacylase</fullName>
    </alternativeName>
</protein>
<evidence type="ECO:0000255" key="1">
    <source>
        <dbReference type="HAMAP-Rule" id="MF_00518"/>
    </source>
</evidence>